<name>DPO3B_SALTY</name>
<sequence>MKFTVEREHLLKPLQQVSGPLGGRPTLPILGNLLLQVADGTLSLTGTDLEMEMVARVTLSQPHEPGATTVPARKFFDICRGLPEGAEIAVQLEGDRMLVRSGRSRFSLSTLPAADFPNLDDWQSEVEFTLPQATMKRLIESTQFSMAHQDVRYYLNGMLFETEGSELRTVATDGHRLAVCSMPLEASLPSHSVIVPRKGVIELMRMLDGGENPLRVQIGSNNIRAHVGDFIFTSKLVDGRFPDYRRVLPKNPDKHLEAGCDILKQAFARAAILSNEKFRGVRLYVSENQLKITANNPEQEEAEEILDVSYGGTEMEIGFNVSYVLDVLNALKCETVRIMLTDSVSSVQIEDAASQSAAYVVMPMRL</sequence>
<reference key="1">
    <citation type="submission" date="1997-11" db="EMBL/GenBank/DDBJ databases">
        <authorList>
            <person name="Amini F."/>
            <person name="Blinkova A."/>
            <person name="Walker J.R."/>
        </authorList>
    </citation>
    <scope>NUCLEOTIDE SEQUENCE [GENOMIC DNA]</scope>
    <source>
        <strain>LT2</strain>
    </source>
</reference>
<reference key="2">
    <citation type="journal article" date="2001" name="Nature">
        <title>Complete genome sequence of Salmonella enterica serovar Typhimurium LT2.</title>
        <authorList>
            <person name="McClelland M."/>
            <person name="Sanderson K.E."/>
            <person name="Spieth J."/>
            <person name="Clifton S.W."/>
            <person name="Latreille P."/>
            <person name="Courtney L."/>
            <person name="Porwollik S."/>
            <person name="Ali J."/>
            <person name="Dante M."/>
            <person name="Du F."/>
            <person name="Hou S."/>
            <person name="Layman D."/>
            <person name="Leonard S."/>
            <person name="Nguyen C."/>
            <person name="Scott K."/>
            <person name="Holmes A."/>
            <person name="Grewal N."/>
            <person name="Mulvaney E."/>
            <person name="Ryan E."/>
            <person name="Sun H."/>
            <person name="Florea L."/>
            <person name="Miller W."/>
            <person name="Stoneking T."/>
            <person name="Nhan M."/>
            <person name="Waterston R."/>
            <person name="Wilson R.K."/>
        </authorList>
    </citation>
    <scope>NUCLEOTIDE SEQUENCE [LARGE SCALE GENOMIC DNA]</scope>
    <source>
        <strain>LT2 / SGSC1412 / ATCC 700720</strain>
    </source>
</reference>
<reference key="3">
    <citation type="journal article" date="1987" name="J. Bacteriol.">
        <title>Comparison of dnaA nucleotide sequences of Escherichia coli, Salmonella typhimurium, and Serratia marcescens.</title>
        <authorList>
            <person name="Skovgaard O."/>
            <person name="Hansen F.G."/>
        </authorList>
    </citation>
    <scope>NUCLEOTIDE SEQUENCE [GENOMIC DNA] OF 1-62</scope>
</reference>
<comment type="function">
    <text evidence="1">Confers DNA tethering and processivity to DNA polymerases and other proteins. Acts as a clamp, forming a ring around DNA (a reaction catalyzed by the clamp-loading complex) which diffuses in an ATP-independent manner freely and bidirectionally along dsDNA. Initially characterized for its ability to contact the catalytic subunit of DNA polymerase III (Pol III), a complex, multichain enzyme responsible for most of the replicative synthesis in bacteria; Pol III exhibits 3'-5' exonuclease proofreading activity. The beta chain is required for initiation of replication as well as for processivity of DNA replication.</text>
</comment>
<comment type="subunit">
    <text evidence="1">Forms a ring-shaped head-to-tail homodimer around DNA which binds and tethers DNA polymerases and other proteins to the DNA. The DNA replisome complex has a single clamp-loading complex (3 tau and 1 each of delta, delta', psi and chi subunits) which binds 3 Pol III cores (1 core on the leading strand and 2 on the lagging strand) each with a beta sliding clamp dimer. Additional proteins in the replisome are other copies of gamma, psi and chi, Ssb, DNA helicase and RNA primase.</text>
</comment>
<comment type="subcellular location">
    <subcellularLocation>
        <location evidence="1">Cytoplasm</location>
    </subcellularLocation>
</comment>
<comment type="similarity">
    <text evidence="2">Belongs to the beta sliding clamp family.</text>
</comment>
<feature type="chain" id="PRO_0000105459" description="Beta sliding clamp">
    <location>
        <begin position="1"/>
        <end position="366"/>
    </location>
</feature>
<feature type="sequence conflict" description="In Ref. 3; AAA02816." evidence="2" ref="3">
    <original>T</original>
    <variation>A</variation>
    <location>
        <position position="41"/>
    </location>
</feature>
<keyword id="KW-0963">Cytoplasm</keyword>
<keyword id="KW-0235">DNA replication</keyword>
<keyword id="KW-0238">DNA-binding</keyword>
<keyword id="KW-0239">DNA-directed DNA polymerase</keyword>
<keyword id="KW-0548">Nucleotidyltransferase</keyword>
<keyword id="KW-1185">Reference proteome</keyword>
<keyword id="KW-0808">Transferase</keyword>
<gene>
    <name type="primary">dnaN</name>
    <name type="ordered locus">STM3837</name>
</gene>
<organism>
    <name type="scientific">Salmonella typhimurium (strain LT2 / SGSC1412 / ATCC 700720)</name>
    <dbReference type="NCBI Taxonomy" id="99287"/>
    <lineage>
        <taxon>Bacteria</taxon>
        <taxon>Pseudomonadati</taxon>
        <taxon>Pseudomonadota</taxon>
        <taxon>Gammaproteobacteria</taxon>
        <taxon>Enterobacterales</taxon>
        <taxon>Enterobacteriaceae</taxon>
        <taxon>Salmonella</taxon>
    </lineage>
</organism>
<evidence type="ECO:0000250" key="1">
    <source>
        <dbReference type="UniProtKB" id="P0A988"/>
    </source>
</evidence>
<evidence type="ECO:0000305" key="2"/>
<accession>P26464</accession>
<accession>O50240</accession>
<proteinExistence type="inferred from homology"/>
<protein>
    <recommendedName>
        <fullName>Beta sliding clamp</fullName>
        <shortName>Beta clamp</shortName>
        <shortName>Sliding clamp</shortName>
    </recommendedName>
    <alternativeName>
        <fullName>Beta-clamp processivity factor</fullName>
    </alternativeName>
    <alternativeName>
        <fullName>DNA polymerase III beta sliding clamp subunit</fullName>
    </alternativeName>
    <alternativeName>
        <fullName>DNA polymerase III subunit beta</fullName>
    </alternativeName>
</protein>
<dbReference type="EMBL" id="AF034747">
    <property type="protein sequence ID" value="AAB87631.1"/>
    <property type="molecule type" value="Genomic_DNA"/>
</dbReference>
<dbReference type="EMBL" id="AE006468">
    <property type="protein sequence ID" value="AAL22696.1"/>
    <property type="molecule type" value="Genomic_DNA"/>
</dbReference>
<dbReference type="EMBL" id="M17352">
    <property type="protein sequence ID" value="AAA02816.1"/>
    <property type="molecule type" value="Unassigned_DNA"/>
</dbReference>
<dbReference type="RefSeq" id="NP_462737.1">
    <property type="nucleotide sequence ID" value="NC_003197.2"/>
</dbReference>
<dbReference type="RefSeq" id="WP_000673478.1">
    <property type="nucleotide sequence ID" value="NC_003197.2"/>
</dbReference>
<dbReference type="SMR" id="P26464"/>
<dbReference type="STRING" id="99287.STM3837"/>
<dbReference type="PaxDb" id="99287-STM3837"/>
<dbReference type="GeneID" id="1255364"/>
<dbReference type="KEGG" id="stm:STM3837"/>
<dbReference type="PATRIC" id="fig|99287.12.peg.4064"/>
<dbReference type="HOGENOM" id="CLU_038149_4_2_6"/>
<dbReference type="OMA" id="YLIMPVR"/>
<dbReference type="PhylomeDB" id="P26464"/>
<dbReference type="BioCyc" id="SENT99287:STM3837-MONOMER"/>
<dbReference type="Proteomes" id="UP000001014">
    <property type="component" value="Chromosome"/>
</dbReference>
<dbReference type="GO" id="GO:0005737">
    <property type="term" value="C:cytoplasm"/>
    <property type="evidence" value="ECO:0007669"/>
    <property type="project" value="UniProtKB-SubCell"/>
</dbReference>
<dbReference type="GO" id="GO:0009360">
    <property type="term" value="C:DNA polymerase III complex"/>
    <property type="evidence" value="ECO:0007669"/>
    <property type="project" value="InterPro"/>
</dbReference>
<dbReference type="GO" id="GO:0008408">
    <property type="term" value="F:3'-5' exonuclease activity"/>
    <property type="evidence" value="ECO:0007669"/>
    <property type="project" value="InterPro"/>
</dbReference>
<dbReference type="GO" id="GO:0003677">
    <property type="term" value="F:DNA binding"/>
    <property type="evidence" value="ECO:0007669"/>
    <property type="project" value="UniProtKB-KW"/>
</dbReference>
<dbReference type="GO" id="GO:0003887">
    <property type="term" value="F:DNA-directed DNA polymerase activity"/>
    <property type="evidence" value="ECO:0007669"/>
    <property type="project" value="UniProtKB-KW"/>
</dbReference>
<dbReference type="GO" id="GO:0006271">
    <property type="term" value="P:DNA strand elongation involved in DNA replication"/>
    <property type="evidence" value="ECO:0000318"/>
    <property type="project" value="GO_Central"/>
</dbReference>
<dbReference type="CDD" id="cd00140">
    <property type="entry name" value="beta_clamp"/>
    <property type="match status" value="1"/>
</dbReference>
<dbReference type="FunFam" id="3.10.150.10:FF:000001">
    <property type="entry name" value="Beta sliding clamp"/>
    <property type="match status" value="1"/>
</dbReference>
<dbReference type="FunFam" id="3.10.150.10:FF:000002">
    <property type="entry name" value="Beta sliding clamp"/>
    <property type="match status" value="1"/>
</dbReference>
<dbReference type="FunFam" id="3.10.150.10:FF:000003">
    <property type="entry name" value="Beta sliding clamp"/>
    <property type="match status" value="1"/>
</dbReference>
<dbReference type="Gene3D" id="3.10.150.10">
    <property type="entry name" value="DNA Polymerase III, subunit A, domain 2"/>
    <property type="match status" value="3"/>
</dbReference>
<dbReference type="InterPro" id="IPR046938">
    <property type="entry name" value="DNA_clamp_sf"/>
</dbReference>
<dbReference type="InterPro" id="IPR001001">
    <property type="entry name" value="DNA_polIII_beta"/>
</dbReference>
<dbReference type="InterPro" id="IPR022635">
    <property type="entry name" value="DNA_polIII_beta_C"/>
</dbReference>
<dbReference type="InterPro" id="IPR022637">
    <property type="entry name" value="DNA_polIII_beta_cen"/>
</dbReference>
<dbReference type="InterPro" id="IPR022634">
    <property type="entry name" value="DNA_polIII_beta_N"/>
</dbReference>
<dbReference type="NCBIfam" id="TIGR00663">
    <property type="entry name" value="dnan"/>
    <property type="match status" value="1"/>
</dbReference>
<dbReference type="PANTHER" id="PTHR30478:SF0">
    <property type="entry name" value="BETA SLIDING CLAMP"/>
    <property type="match status" value="1"/>
</dbReference>
<dbReference type="PANTHER" id="PTHR30478">
    <property type="entry name" value="DNA POLYMERASE III SUBUNIT BETA"/>
    <property type="match status" value="1"/>
</dbReference>
<dbReference type="Pfam" id="PF00712">
    <property type="entry name" value="DNA_pol3_beta"/>
    <property type="match status" value="1"/>
</dbReference>
<dbReference type="Pfam" id="PF02767">
    <property type="entry name" value="DNA_pol3_beta_2"/>
    <property type="match status" value="1"/>
</dbReference>
<dbReference type="Pfam" id="PF02768">
    <property type="entry name" value="DNA_pol3_beta_3"/>
    <property type="match status" value="1"/>
</dbReference>
<dbReference type="PIRSF" id="PIRSF000804">
    <property type="entry name" value="DNA_pol_III_b"/>
    <property type="match status" value="1"/>
</dbReference>
<dbReference type="SMART" id="SM00480">
    <property type="entry name" value="POL3Bc"/>
    <property type="match status" value="1"/>
</dbReference>
<dbReference type="SUPFAM" id="SSF55979">
    <property type="entry name" value="DNA clamp"/>
    <property type="match status" value="3"/>
</dbReference>